<gene>
    <name type="primary">nadsyn1</name>
    <name type="ORF">DDB_G0285877</name>
</gene>
<evidence type="ECO:0000250" key="1"/>
<evidence type="ECO:0000250" key="2">
    <source>
        <dbReference type="UniProtKB" id="P9WJJ3"/>
    </source>
</evidence>
<evidence type="ECO:0000255" key="3">
    <source>
        <dbReference type="PROSITE-ProRule" id="PRU00054"/>
    </source>
</evidence>
<evidence type="ECO:0000305" key="4"/>
<protein>
    <recommendedName>
        <fullName>Glutamine-dependent NAD(+) synthetase</fullName>
        <ecNumber>6.3.5.1</ecNumber>
    </recommendedName>
    <alternativeName>
        <fullName>NAD(+) synthase [glutamine-hydrolyzing]</fullName>
    </alternativeName>
</protein>
<comment type="catalytic activity">
    <reaction>
        <text>deamido-NAD(+) + L-glutamine + ATP + H2O = L-glutamate + AMP + diphosphate + NAD(+) + H(+)</text>
        <dbReference type="Rhea" id="RHEA:24384"/>
        <dbReference type="ChEBI" id="CHEBI:15377"/>
        <dbReference type="ChEBI" id="CHEBI:15378"/>
        <dbReference type="ChEBI" id="CHEBI:29985"/>
        <dbReference type="ChEBI" id="CHEBI:30616"/>
        <dbReference type="ChEBI" id="CHEBI:33019"/>
        <dbReference type="ChEBI" id="CHEBI:57540"/>
        <dbReference type="ChEBI" id="CHEBI:58359"/>
        <dbReference type="ChEBI" id="CHEBI:58437"/>
        <dbReference type="ChEBI" id="CHEBI:456215"/>
        <dbReference type="EC" id="6.3.5.1"/>
    </reaction>
</comment>
<comment type="pathway">
    <text>Cofactor biosynthesis; NAD(+) biosynthesis; NAD(+) from deamido-NAD(+) (L-Gln route): step 1/1.</text>
</comment>
<comment type="similarity">
    <text evidence="4">In the C-terminal section; belongs to the NAD synthetase family.</text>
</comment>
<organism>
    <name type="scientific">Dictyostelium discoideum</name>
    <name type="common">Social amoeba</name>
    <dbReference type="NCBI Taxonomy" id="44689"/>
    <lineage>
        <taxon>Eukaryota</taxon>
        <taxon>Amoebozoa</taxon>
        <taxon>Evosea</taxon>
        <taxon>Eumycetozoa</taxon>
        <taxon>Dictyostelia</taxon>
        <taxon>Dictyosteliales</taxon>
        <taxon>Dictyosteliaceae</taxon>
        <taxon>Dictyostelium</taxon>
    </lineage>
</organism>
<sequence length="713" mass="80583">MKTVTLATCNLNQWAMDFKGNLERIIESINIAKSKGAKYRLGPELEICGYGCEDHFLEQDTMLHCWQSLAVILKDPELTKDILVDVGMPVLHKDVRYNCRVILLNQKIYLIQPKKAMAMDGNYREGRWFTPWIKPRVVETFYLPRIISQITGQDECQIGDAIISTLDTAISSETCEELFTPNSPHIQMGLDGVEIFTNGSGSHHQLRKLDTRVDLIRSATSKSGGIYLYSNQQGCDGSRLYYDGSCMIMINGDCVSQGSQFSLVDIEVITATVDLEDVRSVRASFMARCAQANLTKEFPRVRCPIQLTHIDYCHPPDRVIHINYNTPAEEIGFGPACWLWDYLRRSGLSGYFLPLSGGADSAATAAIIGIMCQLVILDVSKGNKQVLKDAQRITNSPEDYIPTDSREFASRLFFTAYLGSKNSSKETRDRAMEIAKDIGSVHKEVDIDDISQSFNDAFSQITKKQPQFRAHGGTPRENLALQNVQARTRMVLSYHLASLLLWEQGRPGSLLVLGSANCDESLRGYMTKYDCSSADINPIGGMSKIDLRSFIEWAGKFRDMKSILSVLTATPTAELEPITENYTQSDEIDMGMTYEELSIFGKLRKVNRCGPVSMFERLVADWAHLEPSVVAEKVKRFFYYYAINRHKLTTLTPSYHAEGYSPDDNRYDHRQFLYNSKWDVQFETIDKIVLRLSQRPQLKNTVNCPNQASLTQQ</sequence>
<keyword id="KW-0067">ATP-binding</keyword>
<keyword id="KW-0436">Ligase</keyword>
<keyword id="KW-0520">NAD</keyword>
<keyword id="KW-0547">Nucleotide-binding</keyword>
<keyword id="KW-1185">Reference proteome</keyword>
<reference key="1">
    <citation type="journal article" date="2005" name="Nature">
        <title>The genome of the social amoeba Dictyostelium discoideum.</title>
        <authorList>
            <person name="Eichinger L."/>
            <person name="Pachebat J.A."/>
            <person name="Gloeckner G."/>
            <person name="Rajandream M.A."/>
            <person name="Sucgang R."/>
            <person name="Berriman M."/>
            <person name="Song J."/>
            <person name="Olsen R."/>
            <person name="Szafranski K."/>
            <person name="Xu Q."/>
            <person name="Tunggal B."/>
            <person name="Kummerfeld S."/>
            <person name="Madera M."/>
            <person name="Konfortov B.A."/>
            <person name="Rivero F."/>
            <person name="Bankier A.T."/>
            <person name="Lehmann R."/>
            <person name="Hamlin N."/>
            <person name="Davies R."/>
            <person name="Gaudet P."/>
            <person name="Fey P."/>
            <person name="Pilcher K."/>
            <person name="Chen G."/>
            <person name="Saunders D."/>
            <person name="Sodergren E.J."/>
            <person name="Davis P."/>
            <person name="Kerhornou A."/>
            <person name="Nie X."/>
            <person name="Hall N."/>
            <person name="Anjard C."/>
            <person name="Hemphill L."/>
            <person name="Bason N."/>
            <person name="Farbrother P."/>
            <person name="Desany B."/>
            <person name="Just E."/>
            <person name="Morio T."/>
            <person name="Rost R."/>
            <person name="Churcher C.M."/>
            <person name="Cooper J."/>
            <person name="Haydock S."/>
            <person name="van Driessche N."/>
            <person name="Cronin A."/>
            <person name="Goodhead I."/>
            <person name="Muzny D.M."/>
            <person name="Mourier T."/>
            <person name="Pain A."/>
            <person name="Lu M."/>
            <person name="Harper D."/>
            <person name="Lindsay R."/>
            <person name="Hauser H."/>
            <person name="James K.D."/>
            <person name="Quiles M."/>
            <person name="Madan Babu M."/>
            <person name="Saito T."/>
            <person name="Buchrieser C."/>
            <person name="Wardroper A."/>
            <person name="Felder M."/>
            <person name="Thangavelu M."/>
            <person name="Johnson D."/>
            <person name="Knights A."/>
            <person name="Loulseged H."/>
            <person name="Mungall K.L."/>
            <person name="Oliver K."/>
            <person name="Price C."/>
            <person name="Quail M.A."/>
            <person name="Urushihara H."/>
            <person name="Hernandez J."/>
            <person name="Rabbinowitsch E."/>
            <person name="Steffen D."/>
            <person name="Sanders M."/>
            <person name="Ma J."/>
            <person name="Kohara Y."/>
            <person name="Sharp S."/>
            <person name="Simmonds M.N."/>
            <person name="Spiegler S."/>
            <person name="Tivey A."/>
            <person name="Sugano S."/>
            <person name="White B."/>
            <person name="Walker D."/>
            <person name="Woodward J.R."/>
            <person name="Winckler T."/>
            <person name="Tanaka Y."/>
            <person name="Shaulsky G."/>
            <person name="Schleicher M."/>
            <person name="Weinstock G.M."/>
            <person name="Rosenthal A."/>
            <person name="Cox E.C."/>
            <person name="Chisholm R.L."/>
            <person name="Gibbs R.A."/>
            <person name="Loomis W.F."/>
            <person name="Platzer M."/>
            <person name="Kay R.R."/>
            <person name="Williams J.G."/>
            <person name="Dear P.H."/>
            <person name="Noegel A.A."/>
            <person name="Barrell B.G."/>
            <person name="Kuspa A."/>
        </authorList>
    </citation>
    <scope>NUCLEOTIDE SEQUENCE [LARGE SCALE GENOMIC DNA]</scope>
    <source>
        <strain>AX4</strain>
    </source>
</reference>
<name>NADE_DICDI</name>
<proteinExistence type="inferred from homology"/>
<feature type="chain" id="PRO_0000327696" description="Glutamine-dependent NAD(+) synthetase">
    <location>
        <begin position="1"/>
        <end position="713"/>
    </location>
</feature>
<feature type="domain" description="CN hydrolase" evidence="3">
    <location>
        <begin position="4"/>
        <end position="275"/>
    </location>
</feature>
<feature type="region of interest" description="Ligase" evidence="1">
    <location>
        <begin position="324"/>
        <end position="703"/>
    </location>
</feature>
<feature type="active site" description="Proton acceptor; for glutaminase activity" evidence="2">
    <location>
        <position position="44"/>
    </location>
</feature>
<feature type="active site" description="For glutaminase activity" evidence="2">
    <location>
        <position position="114"/>
    </location>
</feature>
<feature type="active site" description="Nucleophile; for glutaminase activity" evidence="2">
    <location>
        <position position="175"/>
    </location>
</feature>
<feature type="active site" evidence="1">
    <location>
        <position position="356"/>
    </location>
</feature>
<feature type="binding site" evidence="1">
    <location>
        <begin position="354"/>
        <end position="361"/>
    </location>
    <ligand>
        <name>ATP</name>
        <dbReference type="ChEBI" id="CHEBI:30616"/>
    </ligand>
</feature>
<accession>Q54ML1</accession>
<dbReference type="EC" id="6.3.5.1"/>
<dbReference type="EMBL" id="AAFI02000082">
    <property type="protein sequence ID" value="EAL64473.1"/>
    <property type="molecule type" value="Genomic_DNA"/>
</dbReference>
<dbReference type="RefSeq" id="XP_637979.1">
    <property type="nucleotide sequence ID" value="XM_632887.1"/>
</dbReference>
<dbReference type="SMR" id="Q54ML1"/>
<dbReference type="FunCoup" id="Q54ML1">
    <property type="interactions" value="546"/>
</dbReference>
<dbReference type="STRING" id="44689.Q54ML1"/>
<dbReference type="PaxDb" id="44689-DDB0231365"/>
<dbReference type="EnsemblProtists" id="EAL64473">
    <property type="protein sequence ID" value="EAL64473"/>
    <property type="gene ID" value="DDB_G0285877"/>
</dbReference>
<dbReference type="GeneID" id="8625331"/>
<dbReference type="KEGG" id="ddi:DDB_G0285877"/>
<dbReference type="dictyBase" id="DDB_G0285877">
    <property type="gene designation" value="nadsyn1"/>
</dbReference>
<dbReference type="VEuPathDB" id="AmoebaDB:DDB_G0285877"/>
<dbReference type="eggNOG" id="KOG2303">
    <property type="taxonomic scope" value="Eukaryota"/>
</dbReference>
<dbReference type="HOGENOM" id="CLU_011884_2_0_1"/>
<dbReference type="InParanoid" id="Q54ML1"/>
<dbReference type="OMA" id="TSQEVCN"/>
<dbReference type="PhylomeDB" id="Q54ML1"/>
<dbReference type="Reactome" id="R-DDI-196807">
    <property type="pathway name" value="Nicotinate metabolism"/>
</dbReference>
<dbReference type="UniPathway" id="UPA00253">
    <property type="reaction ID" value="UER00334"/>
</dbReference>
<dbReference type="PRO" id="PR:Q54ML1"/>
<dbReference type="Proteomes" id="UP000002195">
    <property type="component" value="Chromosome 4"/>
</dbReference>
<dbReference type="GO" id="GO:0005737">
    <property type="term" value="C:cytoplasm"/>
    <property type="evidence" value="ECO:0000318"/>
    <property type="project" value="GO_Central"/>
</dbReference>
<dbReference type="GO" id="GO:0005524">
    <property type="term" value="F:ATP binding"/>
    <property type="evidence" value="ECO:0007669"/>
    <property type="project" value="UniProtKB-KW"/>
</dbReference>
<dbReference type="GO" id="GO:0004359">
    <property type="term" value="F:glutaminase activity"/>
    <property type="evidence" value="ECO:0000318"/>
    <property type="project" value="GO_Central"/>
</dbReference>
<dbReference type="GO" id="GO:0016811">
    <property type="term" value="F:hydrolase activity, acting on carbon-nitrogen (but not peptide) bonds, in linear amides"/>
    <property type="evidence" value="ECO:0000250"/>
    <property type="project" value="dictyBase"/>
</dbReference>
<dbReference type="GO" id="GO:0003952">
    <property type="term" value="F:NAD+ synthase (glutamine-hydrolyzing) activity"/>
    <property type="evidence" value="ECO:0000250"/>
    <property type="project" value="dictyBase"/>
</dbReference>
<dbReference type="GO" id="GO:0009435">
    <property type="term" value="P:NAD biosynthetic process"/>
    <property type="evidence" value="ECO:0000318"/>
    <property type="project" value="GO_Central"/>
</dbReference>
<dbReference type="CDD" id="cd07570">
    <property type="entry name" value="GAT_Gln-NAD-synth"/>
    <property type="match status" value="1"/>
</dbReference>
<dbReference type="CDD" id="cd00553">
    <property type="entry name" value="NAD_synthase"/>
    <property type="match status" value="1"/>
</dbReference>
<dbReference type="FunFam" id="3.40.50.620:FF:000036">
    <property type="entry name" value="Glutamine-dependent NAD(+) synthetase"/>
    <property type="match status" value="1"/>
</dbReference>
<dbReference type="FunFam" id="3.60.110.10:FF:000003">
    <property type="entry name" value="Glutamine-dependent NAD(+) synthetase"/>
    <property type="match status" value="1"/>
</dbReference>
<dbReference type="Gene3D" id="3.60.110.10">
    <property type="entry name" value="Carbon-nitrogen hydrolase"/>
    <property type="match status" value="1"/>
</dbReference>
<dbReference type="Gene3D" id="3.40.50.620">
    <property type="entry name" value="HUPs"/>
    <property type="match status" value="1"/>
</dbReference>
<dbReference type="HAMAP" id="MF_02090">
    <property type="entry name" value="NadE_glutamine_dep"/>
    <property type="match status" value="1"/>
</dbReference>
<dbReference type="InterPro" id="IPR003010">
    <property type="entry name" value="C-N_Hydrolase"/>
</dbReference>
<dbReference type="InterPro" id="IPR036526">
    <property type="entry name" value="C-N_Hydrolase_sf"/>
</dbReference>
<dbReference type="InterPro" id="IPR014445">
    <property type="entry name" value="Gln-dep_NAD_synthase"/>
</dbReference>
<dbReference type="InterPro" id="IPR022310">
    <property type="entry name" value="NAD/GMP_synthase"/>
</dbReference>
<dbReference type="InterPro" id="IPR003694">
    <property type="entry name" value="NAD_synthase"/>
</dbReference>
<dbReference type="InterPro" id="IPR014729">
    <property type="entry name" value="Rossmann-like_a/b/a_fold"/>
</dbReference>
<dbReference type="NCBIfam" id="TIGR00552">
    <property type="entry name" value="nadE"/>
    <property type="match status" value="1"/>
</dbReference>
<dbReference type="PANTHER" id="PTHR23090:SF9">
    <property type="entry name" value="GLUTAMINE-DEPENDENT NAD(+) SYNTHETASE"/>
    <property type="match status" value="1"/>
</dbReference>
<dbReference type="PANTHER" id="PTHR23090">
    <property type="entry name" value="NH 3 /GLUTAMINE-DEPENDENT NAD + SYNTHETASE"/>
    <property type="match status" value="1"/>
</dbReference>
<dbReference type="Pfam" id="PF00795">
    <property type="entry name" value="CN_hydrolase"/>
    <property type="match status" value="1"/>
</dbReference>
<dbReference type="Pfam" id="PF02540">
    <property type="entry name" value="NAD_synthase"/>
    <property type="match status" value="1"/>
</dbReference>
<dbReference type="PIRSF" id="PIRSF006630">
    <property type="entry name" value="NADS_GAT"/>
    <property type="match status" value="1"/>
</dbReference>
<dbReference type="SUPFAM" id="SSF52402">
    <property type="entry name" value="Adenine nucleotide alpha hydrolases-like"/>
    <property type="match status" value="1"/>
</dbReference>
<dbReference type="SUPFAM" id="SSF56317">
    <property type="entry name" value="Carbon-nitrogen hydrolase"/>
    <property type="match status" value="1"/>
</dbReference>
<dbReference type="PROSITE" id="PS50263">
    <property type="entry name" value="CN_HYDROLASE"/>
    <property type="match status" value="1"/>
</dbReference>